<comment type="function">
    <text evidence="1">Initiates the rapid degradation of small, acid-soluble proteins during spore germination.</text>
</comment>
<comment type="catalytic activity">
    <reaction evidence="1">
        <text>Endopeptidase action with P4 Glu or Asp, P1 preferably Glu &gt; Asp, P1' hydrophobic and P2' Ala.</text>
        <dbReference type="EC" id="3.4.24.78"/>
    </reaction>
</comment>
<comment type="subunit">
    <text evidence="1">Homotetramer.</text>
</comment>
<comment type="PTM">
    <text evidence="1">Autoproteolytically processed. The inactive tetrameric zymogen termed p46 autoprocesses to a smaller form termed p41, which is active only during spore germination.</text>
</comment>
<comment type="similarity">
    <text evidence="1">Belongs to the peptidase A25 family.</text>
</comment>
<feature type="propeptide" id="PRO_1000130532" evidence="1">
    <location>
        <begin position="1"/>
        <end position="15"/>
    </location>
</feature>
<feature type="chain" id="PRO_1000130533" description="Germination protease">
    <location>
        <begin position="16"/>
        <end position="367"/>
    </location>
</feature>
<name>GPR_BACMK</name>
<accession>A9VHU8</accession>
<proteinExistence type="inferred from homology"/>
<protein>
    <recommendedName>
        <fullName evidence="1">Germination protease</fullName>
        <ecNumber evidence="1">3.4.24.78</ecNumber>
    </recommendedName>
    <alternativeName>
        <fullName evidence="1">GPR endopeptidase</fullName>
    </alternativeName>
    <alternativeName>
        <fullName evidence="1">Germination proteinase</fullName>
    </alternativeName>
    <alternativeName>
        <fullName evidence="1">Spore protease</fullName>
    </alternativeName>
</protein>
<keyword id="KW-0378">Hydrolase</keyword>
<keyword id="KW-0645">Protease</keyword>
<keyword id="KW-0865">Zymogen</keyword>
<evidence type="ECO:0000255" key="1">
    <source>
        <dbReference type="HAMAP-Rule" id="MF_00626"/>
    </source>
</evidence>
<reference key="1">
    <citation type="journal article" date="2008" name="Chem. Biol. Interact.">
        <title>Extending the Bacillus cereus group genomics to putative food-borne pathogens of different toxicity.</title>
        <authorList>
            <person name="Lapidus A."/>
            <person name="Goltsman E."/>
            <person name="Auger S."/>
            <person name="Galleron N."/>
            <person name="Segurens B."/>
            <person name="Dossat C."/>
            <person name="Land M.L."/>
            <person name="Broussolle V."/>
            <person name="Brillard J."/>
            <person name="Guinebretiere M.-H."/>
            <person name="Sanchis V."/>
            <person name="Nguen-the C."/>
            <person name="Lereclus D."/>
            <person name="Richardson P."/>
            <person name="Wincker P."/>
            <person name="Weissenbach J."/>
            <person name="Ehrlich S.D."/>
            <person name="Sorokin A."/>
        </authorList>
    </citation>
    <scope>NUCLEOTIDE SEQUENCE [LARGE SCALE GENOMIC DNA]</scope>
    <source>
        <strain>KBAB4</strain>
    </source>
</reference>
<sequence>MKEPLDLSKYSVRTDLAVEAHQMLQERQEEQKGIQGVIVKEREEEGVTITKVTIDEIASESMGKKPGSYLTLEVQGIRQQDTELQQKVERIFAKEFSYFLEEVGVSKEASCLIVGLGNWNVTPDALGPIVVENVLVTRHLFKLQPESVEEGFRPVSAIRPGVMGITGIETSDVIYGIIEKTKPDFVIAIDALAARSIERVNSTIQISDTGIHPGSGVGNKRKELSKETLGIPVIAIGVPTVVDAVSITSDTIDFILKHFGRELKEGNKPSRSLLPAGFTFGEKKKLTEEDMPDEKSRNMFLGAIGTLEEEEKRKLIYEVLSPLGHNLMVTPKEVDAFIEDMANVIASGLNAALHHQIDQDNTGAYTH</sequence>
<organism>
    <name type="scientific">Bacillus mycoides (strain KBAB4)</name>
    <name type="common">Bacillus weihenstephanensis</name>
    <dbReference type="NCBI Taxonomy" id="315730"/>
    <lineage>
        <taxon>Bacteria</taxon>
        <taxon>Bacillati</taxon>
        <taxon>Bacillota</taxon>
        <taxon>Bacilli</taxon>
        <taxon>Bacillales</taxon>
        <taxon>Bacillaceae</taxon>
        <taxon>Bacillus</taxon>
        <taxon>Bacillus cereus group</taxon>
    </lineage>
</organism>
<dbReference type="EC" id="3.4.24.78" evidence="1"/>
<dbReference type="EMBL" id="CP000903">
    <property type="protein sequence ID" value="ABY45333.1"/>
    <property type="molecule type" value="Genomic_DNA"/>
</dbReference>
<dbReference type="RefSeq" id="WP_002088693.1">
    <property type="nucleotide sequence ID" value="NC_010184.1"/>
</dbReference>
<dbReference type="SMR" id="A9VHU8"/>
<dbReference type="MEROPS" id="A25.001"/>
<dbReference type="GeneID" id="66266104"/>
<dbReference type="KEGG" id="bwe:BcerKBAB4_4172"/>
<dbReference type="eggNOG" id="COG0680">
    <property type="taxonomic scope" value="Bacteria"/>
</dbReference>
<dbReference type="HOGENOM" id="CLU_055087_1_0_9"/>
<dbReference type="Proteomes" id="UP000002154">
    <property type="component" value="Chromosome"/>
</dbReference>
<dbReference type="GO" id="GO:0004222">
    <property type="term" value="F:metalloendopeptidase activity"/>
    <property type="evidence" value="ECO:0007669"/>
    <property type="project" value="UniProtKB-UniRule"/>
</dbReference>
<dbReference type="GO" id="GO:0006508">
    <property type="term" value="P:proteolysis"/>
    <property type="evidence" value="ECO:0007669"/>
    <property type="project" value="UniProtKB-UniRule"/>
</dbReference>
<dbReference type="GO" id="GO:0009847">
    <property type="term" value="P:spore germination"/>
    <property type="evidence" value="ECO:0007669"/>
    <property type="project" value="UniProtKB-UniRule"/>
</dbReference>
<dbReference type="Gene3D" id="3.40.50.1450">
    <property type="entry name" value="HybD-like"/>
    <property type="match status" value="1"/>
</dbReference>
<dbReference type="HAMAP" id="MF_00626">
    <property type="entry name" value="Germination_prot"/>
    <property type="match status" value="1"/>
</dbReference>
<dbReference type="InterPro" id="IPR023430">
    <property type="entry name" value="Pept_HybD-like_dom_sf"/>
</dbReference>
<dbReference type="InterPro" id="IPR005080">
    <property type="entry name" value="Peptidase_A25"/>
</dbReference>
<dbReference type="NCBIfam" id="TIGR01441">
    <property type="entry name" value="GPR"/>
    <property type="match status" value="1"/>
</dbReference>
<dbReference type="Pfam" id="PF03418">
    <property type="entry name" value="Peptidase_A25"/>
    <property type="match status" value="1"/>
</dbReference>
<dbReference type="PIRSF" id="PIRSF019549">
    <property type="entry name" value="Peptidase_A25"/>
    <property type="match status" value="1"/>
</dbReference>
<dbReference type="SUPFAM" id="SSF53163">
    <property type="entry name" value="HybD-like"/>
    <property type="match status" value="1"/>
</dbReference>
<gene>
    <name evidence="1" type="primary">gpr</name>
    <name type="ordered locus">BcerKBAB4_4172</name>
</gene>